<comment type="subcellular location">
    <subcellularLocation>
        <location evidence="2">Cell membrane</location>
        <topology evidence="2">Multi-pass membrane protein</topology>
    </subcellularLocation>
</comment>
<comment type="similarity">
    <text evidence="2">Belongs to the ADP/ATP translocase tlc family.</text>
</comment>
<evidence type="ECO:0000255" key="1"/>
<evidence type="ECO:0000305" key="2"/>
<feature type="chain" id="PRO_0000102589" description="ADP,ATP carrier protein 2">
    <location>
        <begin position="1"/>
        <end position="540"/>
    </location>
</feature>
<feature type="transmembrane region" description="Helical" evidence="1">
    <location>
        <begin position="24"/>
        <end position="44"/>
    </location>
</feature>
<feature type="transmembrane region" description="Helical" evidence="1">
    <location>
        <begin position="62"/>
        <end position="82"/>
    </location>
</feature>
<feature type="transmembrane region" description="Helical" evidence="1">
    <location>
        <begin position="94"/>
        <end position="114"/>
    </location>
</feature>
<feature type="transmembrane region" description="Helical" evidence="1">
    <location>
        <begin position="151"/>
        <end position="171"/>
    </location>
</feature>
<feature type="transmembrane region" description="Helical" evidence="1">
    <location>
        <begin position="223"/>
        <end position="243"/>
    </location>
</feature>
<feature type="transmembrane region" description="Helical" evidence="1">
    <location>
        <begin position="295"/>
        <end position="315"/>
    </location>
</feature>
<feature type="transmembrane region" description="Helical" evidence="1">
    <location>
        <begin position="337"/>
        <end position="357"/>
    </location>
</feature>
<feature type="transmembrane region" description="Helical" evidence="1">
    <location>
        <begin position="367"/>
        <end position="387"/>
    </location>
</feature>
<feature type="transmembrane region" description="Helical" evidence="1">
    <location>
        <begin position="391"/>
        <end position="411"/>
    </location>
</feature>
<feature type="transmembrane region" description="Helical" evidence="1">
    <location>
        <begin position="458"/>
        <end position="478"/>
    </location>
</feature>
<feature type="transmembrane region" description="Helical" evidence="1">
    <location>
        <begin position="480"/>
        <end position="500"/>
    </location>
</feature>
<name>TLC2_CHLPN</name>
<gene>
    <name type="primary">tlcB</name>
    <name type="synonym">adt_2</name>
    <name type="ordered locus">CPn_0614</name>
    <name type="ordered locus">CP_0133</name>
    <name type="ordered locus">CpB0638</name>
</gene>
<reference key="1">
    <citation type="journal article" date="1999" name="Nat. Genet.">
        <title>Comparative genomes of Chlamydia pneumoniae and C. trachomatis.</title>
        <authorList>
            <person name="Kalman S."/>
            <person name="Mitchell W.P."/>
            <person name="Marathe R."/>
            <person name="Lammel C.J."/>
            <person name="Fan J."/>
            <person name="Hyman R.W."/>
            <person name="Olinger L."/>
            <person name="Grimwood J."/>
            <person name="Davis R.W."/>
            <person name="Stephens R.S."/>
        </authorList>
    </citation>
    <scope>NUCLEOTIDE SEQUENCE [LARGE SCALE GENOMIC DNA]</scope>
    <source>
        <strain>CWL029</strain>
    </source>
</reference>
<reference key="2">
    <citation type="journal article" date="2000" name="Nucleic Acids Res.">
        <title>Genome sequences of Chlamydia trachomatis MoPn and Chlamydia pneumoniae AR39.</title>
        <authorList>
            <person name="Read T.D."/>
            <person name="Brunham R.C."/>
            <person name="Shen C."/>
            <person name="Gill S.R."/>
            <person name="Heidelberg J.F."/>
            <person name="White O."/>
            <person name="Hickey E.K."/>
            <person name="Peterson J.D."/>
            <person name="Utterback T.R."/>
            <person name="Berry K.J."/>
            <person name="Bass S."/>
            <person name="Linher K.D."/>
            <person name="Weidman J.F."/>
            <person name="Khouri H.M."/>
            <person name="Craven B."/>
            <person name="Bowman C."/>
            <person name="Dodson R.J."/>
            <person name="Gwinn M.L."/>
            <person name="Nelson W.C."/>
            <person name="DeBoy R.T."/>
            <person name="Kolonay J.F."/>
            <person name="McClarty G."/>
            <person name="Salzberg S.L."/>
            <person name="Eisen J.A."/>
            <person name="Fraser C.M."/>
        </authorList>
    </citation>
    <scope>NUCLEOTIDE SEQUENCE [LARGE SCALE GENOMIC DNA]</scope>
    <source>
        <strain>AR39</strain>
    </source>
</reference>
<reference key="3">
    <citation type="journal article" date="2000" name="Nucleic Acids Res.">
        <title>Comparison of whole genome sequences of Chlamydia pneumoniae J138 from Japan and CWL029 from USA.</title>
        <authorList>
            <person name="Shirai M."/>
            <person name="Hirakawa H."/>
            <person name="Kimoto M."/>
            <person name="Tabuchi M."/>
            <person name="Kishi F."/>
            <person name="Ouchi K."/>
            <person name="Shiba T."/>
            <person name="Ishii K."/>
            <person name="Hattori M."/>
            <person name="Kuhara S."/>
            <person name="Nakazawa T."/>
        </authorList>
    </citation>
    <scope>NUCLEOTIDE SEQUENCE [LARGE SCALE GENOMIC DNA]</scope>
    <source>
        <strain>J138</strain>
    </source>
</reference>
<reference key="4">
    <citation type="submission" date="2002-05" db="EMBL/GenBank/DDBJ databases">
        <title>The genome sequence of Chlamydia pneumoniae TW183 and comparison with other Chlamydia strains based on whole genome sequence analysis.</title>
        <authorList>
            <person name="Geng M.M."/>
            <person name="Schuhmacher A."/>
            <person name="Muehldorfer I."/>
            <person name="Bensch K.W."/>
            <person name="Schaefer K.P."/>
            <person name="Schneider S."/>
            <person name="Pohl T."/>
            <person name="Essig A."/>
            <person name="Marre R."/>
            <person name="Melchers K."/>
        </authorList>
    </citation>
    <scope>NUCLEOTIDE SEQUENCE [LARGE SCALE GENOMIC DNA]</scope>
    <source>
        <strain>TW-183</strain>
    </source>
</reference>
<protein>
    <recommendedName>
        <fullName>ADP,ATP carrier protein 2</fullName>
    </recommendedName>
    <alternativeName>
        <fullName>ADP/ATP translocase 2</fullName>
    </alternativeName>
</protein>
<accession>Q9Z7U0</accession>
<accession>Q9JQI0</accession>
<proteinExistence type="inferred from homology"/>
<keyword id="KW-0067">ATP-binding</keyword>
<keyword id="KW-1003">Cell membrane</keyword>
<keyword id="KW-0472">Membrane</keyword>
<keyword id="KW-0547">Nucleotide-binding</keyword>
<keyword id="KW-0812">Transmembrane</keyword>
<keyword id="KW-1133">Transmembrane helix</keyword>
<keyword id="KW-0813">Transport</keyword>
<organism>
    <name type="scientific">Chlamydia pneumoniae</name>
    <name type="common">Chlamydophila pneumoniae</name>
    <dbReference type="NCBI Taxonomy" id="83558"/>
    <lineage>
        <taxon>Bacteria</taxon>
        <taxon>Pseudomonadati</taxon>
        <taxon>Chlamydiota</taxon>
        <taxon>Chlamydiia</taxon>
        <taxon>Chlamydiales</taxon>
        <taxon>Chlamydiaceae</taxon>
        <taxon>Chlamydia/Chlamydophila group</taxon>
        <taxon>Chlamydia</taxon>
    </lineage>
</organism>
<dbReference type="EMBL" id="AE001363">
    <property type="protein sequence ID" value="AAD18753.1"/>
    <property type="molecule type" value="Genomic_DNA"/>
</dbReference>
<dbReference type="EMBL" id="AE002161">
    <property type="protein sequence ID" value="AAF38016.1"/>
    <property type="molecule type" value="Genomic_DNA"/>
</dbReference>
<dbReference type="EMBL" id="BA000008">
    <property type="protein sequence ID" value="BAA98821.1"/>
    <property type="molecule type" value="Genomic_DNA"/>
</dbReference>
<dbReference type="EMBL" id="AE009440">
    <property type="protein sequence ID" value="AAP98567.1"/>
    <property type="molecule type" value="Genomic_DNA"/>
</dbReference>
<dbReference type="PIR" id="B72056">
    <property type="entry name" value="B72056"/>
</dbReference>
<dbReference type="PIR" id="C86567">
    <property type="entry name" value="C86567"/>
</dbReference>
<dbReference type="RefSeq" id="NP_224810.1">
    <property type="nucleotide sequence ID" value="NC_000922.1"/>
</dbReference>
<dbReference type="STRING" id="406984.CPK_ORF00013"/>
<dbReference type="GeneID" id="45050662"/>
<dbReference type="KEGG" id="cpa:CP_0133"/>
<dbReference type="KEGG" id="cpj:adt_2"/>
<dbReference type="KEGG" id="cpn:CPn_0614"/>
<dbReference type="KEGG" id="cpt:CpB0638"/>
<dbReference type="PATRIC" id="fig|115713.3.peg.683"/>
<dbReference type="eggNOG" id="COG3202">
    <property type="taxonomic scope" value="Bacteria"/>
</dbReference>
<dbReference type="HOGENOM" id="CLU_023964_0_1_0"/>
<dbReference type="OrthoDB" id="19786at2"/>
<dbReference type="Proteomes" id="UP000000583">
    <property type="component" value="Chromosome"/>
</dbReference>
<dbReference type="Proteomes" id="UP000000801">
    <property type="component" value="Chromosome"/>
</dbReference>
<dbReference type="GO" id="GO:0005886">
    <property type="term" value="C:plasma membrane"/>
    <property type="evidence" value="ECO:0007669"/>
    <property type="project" value="UniProtKB-SubCell"/>
</dbReference>
<dbReference type="GO" id="GO:0005524">
    <property type="term" value="F:ATP binding"/>
    <property type="evidence" value="ECO:0007669"/>
    <property type="project" value="UniProtKB-KW"/>
</dbReference>
<dbReference type="GO" id="GO:0005471">
    <property type="term" value="F:ATP:ADP antiporter activity"/>
    <property type="evidence" value="ECO:0007669"/>
    <property type="project" value="InterPro"/>
</dbReference>
<dbReference type="Gene3D" id="1.20.1250.20">
    <property type="entry name" value="MFS general substrate transporter like domains"/>
    <property type="match status" value="1"/>
</dbReference>
<dbReference type="InterPro" id="IPR004667">
    <property type="entry name" value="ADP_ATP_car_bac_type"/>
</dbReference>
<dbReference type="InterPro" id="IPR036259">
    <property type="entry name" value="MFS_trans_sf"/>
</dbReference>
<dbReference type="NCBIfam" id="TIGR00769">
    <property type="entry name" value="AAA"/>
    <property type="match status" value="1"/>
</dbReference>
<dbReference type="PANTHER" id="PTHR31187">
    <property type="match status" value="1"/>
</dbReference>
<dbReference type="PANTHER" id="PTHR31187:SF1">
    <property type="entry name" value="ADP,ATP CARRIER PROTEIN 1"/>
    <property type="match status" value="1"/>
</dbReference>
<dbReference type="Pfam" id="PF03219">
    <property type="entry name" value="TLC"/>
    <property type="match status" value="1"/>
</dbReference>
<dbReference type="SUPFAM" id="SSF103473">
    <property type="entry name" value="MFS general substrate transporter"/>
    <property type="match status" value="1"/>
</dbReference>
<sequence>MQSSEVKPFSRLRAYLCPIYKSEFSKFVPLFLLAFFVGFNYCLLKNMKDTLVIVGSDAGAEVIPFLKVWGIVPGAVIVTMVYGWLGSRYPRDTVFYCFMAAFLGFFFLFAVIIYPVGDSLHLNSLADKLQELLPQGLRGFIVMVRYWSYSIYYVMSELWSSVVLSMLFWGLANQITTITEAGRFYALINTGLNLSSICAGEISYWMGKQTFVAYSFACDSWHSVMLNLTMLITCSGLIMIWLYRRIHHLTIDTSIPPSRRVLAEEGAATANLKEKKKPKAKARNLFLHLIQSRYLLGLAIIVLSYNLVIHLFEVVWKDQVSQIYSSHVEFNGYMSRITTLIGVVSVLAAVLLTGQCIRKWGWTVGALVTPLVMLVSGLLFFGTIFAAKRDISIFGGVLGMTPLALAAWTGGMQNVLSRGTKFTFFDQTKEMAFIPLSPEDKNHGKAAIDGVVSRIGKSGGSLIYQGLLVIFSSVAASLNVIALVLLIIMVVWIAVVAYIGKEYYSRAADAVATLKQPKEPSSSIVREAQESVEQEEMAVL</sequence>